<proteinExistence type="inferred from homology"/>
<gene>
    <name evidence="1" type="primary">dnaJ</name>
    <name type="ordered locus">SG0013</name>
</gene>
<organism>
    <name type="scientific">Salmonella gallinarum (strain 287/91 / NCTC 13346)</name>
    <dbReference type="NCBI Taxonomy" id="550538"/>
    <lineage>
        <taxon>Bacteria</taxon>
        <taxon>Pseudomonadati</taxon>
        <taxon>Pseudomonadota</taxon>
        <taxon>Gammaproteobacteria</taxon>
        <taxon>Enterobacterales</taxon>
        <taxon>Enterobacteriaceae</taxon>
        <taxon>Salmonella</taxon>
    </lineage>
</organism>
<dbReference type="EMBL" id="AM933173">
    <property type="protein sequence ID" value="CAR35923.1"/>
    <property type="molecule type" value="Genomic_DNA"/>
</dbReference>
<dbReference type="RefSeq" id="WP_001119009.1">
    <property type="nucleotide sequence ID" value="NC_011274.1"/>
</dbReference>
<dbReference type="SMR" id="B5RF09"/>
<dbReference type="KEGG" id="seg:SG0013"/>
<dbReference type="HOGENOM" id="CLU_017633_0_7_6"/>
<dbReference type="Proteomes" id="UP000008321">
    <property type="component" value="Chromosome"/>
</dbReference>
<dbReference type="GO" id="GO:0005737">
    <property type="term" value="C:cytoplasm"/>
    <property type="evidence" value="ECO:0007669"/>
    <property type="project" value="UniProtKB-SubCell"/>
</dbReference>
<dbReference type="GO" id="GO:0005524">
    <property type="term" value="F:ATP binding"/>
    <property type="evidence" value="ECO:0007669"/>
    <property type="project" value="InterPro"/>
</dbReference>
<dbReference type="GO" id="GO:0031072">
    <property type="term" value="F:heat shock protein binding"/>
    <property type="evidence" value="ECO:0007669"/>
    <property type="project" value="InterPro"/>
</dbReference>
<dbReference type="GO" id="GO:0051082">
    <property type="term" value="F:unfolded protein binding"/>
    <property type="evidence" value="ECO:0007669"/>
    <property type="project" value="UniProtKB-UniRule"/>
</dbReference>
<dbReference type="GO" id="GO:0008270">
    <property type="term" value="F:zinc ion binding"/>
    <property type="evidence" value="ECO:0007669"/>
    <property type="project" value="UniProtKB-UniRule"/>
</dbReference>
<dbReference type="GO" id="GO:0051085">
    <property type="term" value="P:chaperone cofactor-dependent protein refolding"/>
    <property type="evidence" value="ECO:0007669"/>
    <property type="project" value="TreeGrafter"/>
</dbReference>
<dbReference type="GO" id="GO:0006260">
    <property type="term" value="P:DNA replication"/>
    <property type="evidence" value="ECO:0007669"/>
    <property type="project" value="UniProtKB-KW"/>
</dbReference>
<dbReference type="GO" id="GO:0042026">
    <property type="term" value="P:protein refolding"/>
    <property type="evidence" value="ECO:0007669"/>
    <property type="project" value="TreeGrafter"/>
</dbReference>
<dbReference type="GO" id="GO:0009408">
    <property type="term" value="P:response to heat"/>
    <property type="evidence" value="ECO:0007669"/>
    <property type="project" value="InterPro"/>
</dbReference>
<dbReference type="CDD" id="cd06257">
    <property type="entry name" value="DnaJ"/>
    <property type="match status" value="1"/>
</dbReference>
<dbReference type="CDD" id="cd10747">
    <property type="entry name" value="DnaJ_C"/>
    <property type="match status" value="1"/>
</dbReference>
<dbReference type="CDD" id="cd10719">
    <property type="entry name" value="DnaJ_zf"/>
    <property type="match status" value="1"/>
</dbReference>
<dbReference type="FunFam" id="1.10.287.110:FF:000003">
    <property type="entry name" value="Molecular chaperone DnaJ"/>
    <property type="match status" value="1"/>
</dbReference>
<dbReference type="FunFam" id="2.10.230.10:FF:000002">
    <property type="entry name" value="Molecular chaperone DnaJ"/>
    <property type="match status" value="1"/>
</dbReference>
<dbReference type="FunFam" id="2.60.260.20:FF:000004">
    <property type="entry name" value="Molecular chaperone DnaJ"/>
    <property type="match status" value="1"/>
</dbReference>
<dbReference type="Gene3D" id="1.10.287.110">
    <property type="entry name" value="DnaJ domain"/>
    <property type="match status" value="1"/>
</dbReference>
<dbReference type="Gene3D" id="2.10.230.10">
    <property type="entry name" value="Heat shock protein DnaJ, cysteine-rich domain"/>
    <property type="match status" value="1"/>
</dbReference>
<dbReference type="Gene3D" id="2.60.260.20">
    <property type="entry name" value="Urease metallochaperone UreE, N-terminal domain"/>
    <property type="match status" value="2"/>
</dbReference>
<dbReference type="HAMAP" id="MF_01152">
    <property type="entry name" value="DnaJ"/>
    <property type="match status" value="1"/>
</dbReference>
<dbReference type="InterPro" id="IPR012724">
    <property type="entry name" value="DnaJ"/>
</dbReference>
<dbReference type="InterPro" id="IPR002939">
    <property type="entry name" value="DnaJ_C"/>
</dbReference>
<dbReference type="InterPro" id="IPR001623">
    <property type="entry name" value="DnaJ_domain"/>
</dbReference>
<dbReference type="InterPro" id="IPR018253">
    <property type="entry name" value="DnaJ_domain_CS"/>
</dbReference>
<dbReference type="InterPro" id="IPR008971">
    <property type="entry name" value="HSP40/DnaJ_pept-bd"/>
</dbReference>
<dbReference type="InterPro" id="IPR001305">
    <property type="entry name" value="HSP_DnaJ_Cys-rich_dom"/>
</dbReference>
<dbReference type="InterPro" id="IPR036410">
    <property type="entry name" value="HSP_DnaJ_Cys-rich_dom_sf"/>
</dbReference>
<dbReference type="InterPro" id="IPR036869">
    <property type="entry name" value="J_dom_sf"/>
</dbReference>
<dbReference type="NCBIfam" id="TIGR02349">
    <property type="entry name" value="DnaJ_bact"/>
    <property type="match status" value="1"/>
</dbReference>
<dbReference type="NCBIfam" id="NF008035">
    <property type="entry name" value="PRK10767.1"/>
    <property type="match status" value="1"/>
</dbReference>
<dbReference type="PANTHER" id="PTHR43096:SF48">
    <property type="entry name" value="CHAPERONE PROTEIN DNAJ"/>
    <property type="match status" value="1"/>
</dbReference>
<dbReference type="PANTHER" id="PTHR43096">
    <property type="entry name" value="DNAJ HOMOLOG 1, MITOCHONDRIAL-RELATED"/>
    <property type="match status" value="1"/>
</dbReference>
<dbReference type="Pfam" id="PF00226">
    <property type="entry name" value="DnaJ"/>
    <property type="match status" value="1"/>
</dbReference>
<dbReference type="Pfam" id="PF01556">
    <property type="entry name" value="DnaJ_C"/>
    <property type="match status" value="1"/>
</dbReference>
<dbReference type="Pfam" id="PF00684">
    <property type="entry name" value="DnaJ_CXXCXGXG"/>
    <property type="match status" value="1"/>
</dbReference>
<dbReference type="PRINTS" id="PR00625">
    <property type="entry name" value="JDOMAIN"/>
</dbReference>
<dbReference type="SMART" id="SM00271">
    <property type="entry name" value="DnaJ"/>
    <property type="match status" value="1"/>
</dbReference>
<dbReference type="SUPFAM" id="SSF46565">
    <property type="entry name" value="Chaperone J-domain"/>
    <property type="match status" value="1"/>
</dbReference>
<dbReference type="SUPFAM" id="SSF57938">
    <property type="entry name" value="DnaJ/Hsp40 cysteine-rich domain"/>
    <property type="match status" value="1"/>
</dbReference>
<dbReference type="SUPFAM" id="SSF49493">
    <property type="entry name" value="HSP40/DnaJ peptide-binding domain"/>
    <property type="match status" value="2"/>
</dbReference>
<dbReference type="PROSITE" id="PS00636">
    <property type="entry name" value="DNAJ_1"/>
    <property type="match status" value="1"/>
</dbReference>
<dbReference type="PROSITE" id="PS50076">
    <property type="entry name" value="DNAJ_2"/>
    <property type="match status" value="1"/>
</dbReference>
<dbReference type="PROSITE" id="PS51188">
    <property type="entry name" value="ZF_CR"/>
    <property type="match status" value="1"/>
</dbReference>
<comment type="function">
    <text evidence="1">Participates actively in the response to hyperosmotic and heat shock by preventing the aggregation of stress-denatured proteins and by disaggregating proteins, also in an autonomous, DnaK-independent fashion. Unfolded proteins bind initially to DnaJ; upon interaction with the DnaJ-bound protein, DnaK hydrolyzes its bound ATP, resulting in the formation of a stable complex. GrpE releases ADP from DnaK; ATP binding to DnaK triggers the release of the substrate protein, thus completing the reaction cycle. Several rounds of ATP-dependent interactions between DnaJ, DnaK and GrpE are required for fully efficient folding. Also involved, together with DnaK and GrpE, in the DNA replication of plasmids through activation of initiation proteins.</text>
</comment>
<comment type="cofactor">
    <cofactor evidence="1">
        <name>Zn(2+)</name>
        <dbReference type="ChEBI" id="CHEBI:29105"/>
    </cofactor>
    <text evidence="1">Binds 2 Zn(2+) ions per monomer.</text>
</comment>
<comment type="subunit">
    <text evidence="1">Homodimer.</text>
</comment>
<comment type="subcellular location">
    <subcellularLocation>
        <location evidence="1">Cytoplasm</location>
    </subcellularLocation>
</comment>
<comment type="domain">
    <text evidence="1">The J domain is necessary and sufficient to stimulate DnaK ATPase activity. Zinc center 1 plays an important role in the autonomous, DnaK-independent chaperone activity of DnaJ. Zinc center 2 is essential for interaction with DnaK and for DnaJ activity.</text>
</comment>
<comment type="similarity">
    <text evidence="1">Belongs to the DnaJ family.</text>
</comment>
<feature type="chain" id="PRO_1000137722" description="Chaperone protein DnaJ">
    <location>
        <begin position="1"/>
        <end position="379"/>
    </location>
</feature>
<feature type="domain" description="J" evidence="1">
    <location>
        <begin position="5"/>
        <end position="70"/>
    </location>
</feature>
<feature type="repeat" description="CXXCXGXG motif">
    <location>
        <begin position="147"/>
        <end position="154"/>
    </location>
</feature>
<feature type="repeat" description="CXXCXGXG motif">
    <location>
        <begin position="164"/>
        <end position="171"/>
    </location>
</feature>
<feature type="repeat" description="CXXCXGXG motif">
    <location>
        <begin position="186"/>
        <end position="193"/>
    </location>
</feature>
<feature type="repeat" description="CXXCXGXG motif">
    <location>
        <begin position="200"/>
        <end position="207"/>
    </location>
</feature>
<feature type="zinc finger region" description="CR-type" evidence="1">
    <location>
        <begin position="134"/>
        <end position="212"/>
    </location>
</feature>
<feature type="binding site" evidence="1">
    <location>
        <position position="147"/>
    </location>
    <ligand>
        <name>Zn(2+)</name>
        <dbReference type="ChEBI" id="CHEBI:29105"/>
        <label>1</label>
    </ligand>
</feature>
<feature type="binding site" evidence="1">
    <location>
        <position position="150"/>
    </location>
    <ligand>
        <name>Zn(2+)</name>
        <dbReference type="ChEBI" id="CHEBI:29105"/>
        <label>1</label>
    </ligand>
</feature>
<feature type="binding site" evidence="1">
    <location>
        <position position="164"/>
    </location>
    <ligand>
        <name>Zn(2+)</name>
        <dbReference type="ChEBI" id="CHEBI:29105"/>
        <label>2</label>
    </ligand>
</feature>
<feature type="binding site" evidence="1">
    <location>
        <position position="167"/>
    </location>
    <ligand>
        <name>Zn(2+)</name>
        <dbReference type="ChEBI" id="CHEBI:29105"/>
        <label>2</label>
    </ligand>
</feature>
<feature type="binding site" evidence="1">
    <location>
        <position position="186"/>
    </location>
    <ligand>
        <name>Zn(2+)</name>
        <dbReference type="ChEBI" id="CHEBI:29105"/>
        <label>2</label>
    </ligand>
</feature>
<feature type="binding site" evidence="1">
    <location>
        <position position="189"/>
    </location>
    <ligand>
        <name>Zn(2+)</name>
        <dbReference type="ChEBI" id="CHEBI:29105"/>
        <label>2</label>
    </ligand>
</feature>
<feature type="binding site" evidence="1">
    <location>
        <position position="200"/>
    </location>
    <ligand>
        <name>Zn(2+)</name>
        <dbReference type="ChEBI" id="CHEBI:29105"/>
        <label>1</label>
    </ligand>
</feature>
<feature type="binding site" evidence="1">
    <location>
        <position position="203"/>
    </location>
    <ligand>
        <name>Zn(2+)</name>
        <dbReference type="ChEBI" id="CHEBI:29105"/>
        <label>1</label>
    </ligand>
</feature>
<protein>
    <recommendedName>
        <fullName evidence="1">Chaperone protein DnaJ</fullName>
    </recommendedName>
</protein>
<sequence length="379" mass="41313">MAKRDYYEILGVSKTAEEREIKKAYKRLAMKYHPDRNQGDKEAEAKFKEIKEAYEVLTDAQKRAAYDQYGHAAFEQGGMGGGFGGGFNGGADFSDIFGDVFGDIFGGGRGRQRAARGADLRYNMDLTLEEAVRGVTKEIRIPTLEECDVCHGSGAKAGTQPQTCPTCHGSGQVQMRQGFFAVQQTCPHCQGRGTLIKDPCHKCHGHGRVEKSKTLSVKIPAGVDTGDRIRLAGEGEAGEHGAPAGDLYVQVQVKQHPIFEREGNNLYCEVPINFAMAALGGEIEVPTLDGRVMLKVPSETQTGKLFRMRGKGVKSVRGGAQGDLLCRVVVETPVGLSEKQKQLLKDLQESFGGPTGEKNSPRSKSFFDGVKKFFDDLTR</sequence>
<keyword id="KW-0143">Chaperone</keyword>
<keyword id="KW-0963">Cytoplasm</keyword>
<keyword id="KW-0235">DNA replication</keyword>
<keyword id="KW-0479">Metal-binding</keyword>
<keyword id="KW-0677">Repeat</keyword>
<keyword id="KW-0346">Stress response</keyword>
<keyword id="KW-0862">Zinc</keyword>
<keyword id="KW-0863">Zinc-finger</keyword>
<name>DNAJ_SALG2</name>
<evidence type="ECO:0000255" key="1">
    <source>
        <dbReference type="HAMAP-Rule" id="MF_01152"/>
    </source>
</evidence>
<accession>B5RF09</accession>
<reference key="1">
    <citation type="journal article" date="2008" name="Genome Res.">
        <title>Comparative genome analysis of Salmonella enteritidis PT4 and Salmonella gallinarum 287/91 provides insights into evolutionary and host adaptation pathways.</title>
        <authorList>
            <person name="Thomson N.R."/>
            <person name="Clayton D.J."/>
            <person name="Windhorst D."/>
            <person name="Vernikos G."/>
            <person name="Davidson S."/>
            <person name="Churcher C."/>
            <person name="Quail M.A."/>
            <person name="Stevens M."/>
            <person name="Jones M.A."/>
            <person name="Watson M."/>
            <person name="Barron A."/>
            <person name="Layton A."/>
            <person name="Pickard D."/>
            <person name="Kingsley R.A."/>
            <person name="Bignell A."/>
            <person name="Clark L."/>
            <person name="Harris B."/>
            <person name="Ormond D."/>
            <person name="Abdellah Z."/>
            <person name="Brooks K."/>
            <person name="Cherevach I."/>
            <person name="Chillingworth T."/>
            <person name="Woodward J."/>
            <person name="Norberczak H."/>
            <person name="Lord A."/>
            <person name="Arrowsmith C."/>
            <person name="Jagels K."/>
            <person name="Moule S."/>
            <person name="Mungall K."/>
            <person name="Saunders M."/>
            <person name="Whitehead S."/>
            <person name="Chabalgoity J.A."/>
            <person name="Maskell D."/>
            <person name="Humphreys T."/>
            <person name="Roberts M."/>
            <person name="Barrow P.A."/>
            <person name="Dougan G."/>
            <person name="Parkhill J."/>
        </authorList>
    </citation>
    <scope>NUCLEOTIDE SEQUENCE [LARGE SCALE GENOMIC DNA]</scope>
    <source>
        <strain>287/91 / NCTC 13346</strain>
    </source>
</reference>